<reference key="1">
    <citation type="submission" date="2007-03" db="EMBL/GenBank/DDBJ databases">
        <title>Complete sequence of chromosome 1 of Burkholderia vietnamiensis G4.</title>
        <authorList>
            <consortium name="US DOE Joint Genome Institute"/>
            <person name="Copeland A."/>
            <person name="Lucas S."/>
            <person name="Lapidus A."/>
            <person name="Barry K."/>
            <person name="Detter J.C."/>
            <person name="Glavina del Rio T."/>
            <person name="Hammon N."/>
            <person name="Israni S."/>
            <person name="Dalin E."/>
            <person name="Tice H."/>
            <person name="Pitluck S."/>
            <person name="Chain P."/>
            <person name="Malfatti S."/>
            <person name="Shin M."/>
            <person name="Vergez L."/>
            <person name="Schmutz J."/>
            <person name="Larimer F."/>
            <person name="Land M."/>
            <person name="Hauser L."/>
            <person name="Kyrpides N."/>
            <person name="Tiedje J."/>
            <person name="Richardson P."/>
        </authorList>
    </citation>
    <scope>NUCLEOTIDE SEQUENCE [LARGE SCALE GENOMIC DNA]</scope>
    <source>
        <strain>G4 / LMG 22486</strain>
    </source>
</reference>
<organism>
    <name type="scientific">Burkholderia vietnamiensis (strain G4 / LMG 22486)</name>
    <name type="common">Burkholderia cepacia (strain R1808)</name>
    <dbReference type="NCBI Taxonomy" id="269482"/>
    <lineage>
        <taxon>Bacteria</taxon>
        <taxon>Pseudomonadati</taxon>
        <taxon>Pseudomonadota</taxon>
        <taxon>Betaproteobacteria</taxon>
        <taxon>Burkholderiales</taxon>
        <taxon>Burkholderiaceae</taxon>
        <taxon>Burkholderia</taxon>
        <taxon>Burkholderia cepacia complex</taxon>
    </lineage>
</organism>
<protein>
    <recommendedName>
        <fullName evidence="1">Methionyl-tRNA formyltransferase</fullName>
        <ecNumber evidence="1">2.1.2.9</ecNumber>
    </recommendedName>
</protein>
<evidence type="ECO:0000255" key="1">
    <source>
        <dbReference type="HAMAP-Rule" id="MF_00182"/>
    </source>
</evidence>
<proteinExistence type="inferred from homology"/>
<comment type="function">
    <text evidence="1">Attaches a formyl group to the free amino group of methionyl-tRNA(fMet). The formyl group appears to play a dual role in the initiator identity of N-formylmethionyl-tRNA by promoting its recognition by IF2 and preventing the misappropriation of this tRNA by the elongation apparatus.</text>
</comment>
<comment type="catalytic activity">
    <reaction evidence="1">
        <text>L-methionyl-tRNA(fMet) + (6R)-10-formyltetrahydrofolate = N-formyl-L-methionyl-tRNA(fMet) + (6S)-5,6,7,8-tetrahydrofolate + H(+)</text>
        <dbReference type="Rhea" id="RHEA:24380"/>
        <dbReference type="Rhea" id="RHEA-COMP:9952"/>
        <dbReference type="Rhea" id="RHEA-COMP:9953"/>
        <dbReference type="ChEBI" id="CHEBI:15378"/>
        <dbReference type="ChEBI" id="CHEBI:57453"/>
        <dbReference type="ChEBI" id="CHEBI:78530"/>
        <dbReference type="ChEBI" id="CHEBI:78844"/>
        <dbReference type="ChEBI" id="CHEBI:195366"/>
        <dbReference type="EC" id="2.1.2.9"/>
    </reaction>
</comment>
<comment type="similarity">
    <text evidence="1">Belongs to the Fmt family.</text>
</comment>
<name>FMT_BURVG</name>
<gene>
    <name evidence="1" type="primary">fmt</name>
    <name type="ordered locus">Bcep1808_3285</name>
</gene>
<dbReference type="EC" id="2.1.2.9" evidence="1"/>
<dbReference type="EMBL" id="CP000614">
    <property type="protein sequence ID" value="ABO56275.1"/>
    <property type="molecule type" value="Genomic_DNA"/>
</dbReference>
<dbReference type="SMR" id="A4JJ22"/>
<dbReference type="KEGG" id="bvi:Bcep1808_3285"/>
<dbReference type="eggNOG" id="COG0223">
    <property type="taxonomic scope" value="Bacteria"/>
</dbReference>
<dbReference type="HOGENOM" id="CLU_033347_1_2_4"/>
<dbReference type="Proteomes" id="UP000002287">
    <property type="component" value="Chromosome 1"/>
</dbReference>
<dbReference type="GO" id="GO:0005829">
    <property type="term" value="C:cytosol"/>
    <property type="evidence" value="ECO:0007669"/>
    <property type="project" value="TreeGrafter"/>
</dbReference>
<dbReference type="GO" id="GO:0004479">
    <property type="term" value="F:methionyl-tRNA formyltransferase activity"/>
    <property type="evidence" value="ECO:0007669"/>
    <property type="project" value="UniProtKB-UniRule"/>
</dbReference>
<dbReference type="CDD" id="cd08646">
    <property type="entry name" value="FMT_core_Met-tRNA-FMT_N"/>
    <property type="match status" value="1"/>
</dbReference>
<dbReference type="CDD" id="cd08704">
    <property type="entry name" value="Met_tRNA_FMT_C"/>
    <property type="match status" value="1"/>
</dbReference>
<dbReference type="Gene3D" id="3.10.25.10">
    <property type="entry name" value="Formyl transferase, C-terminal domain"/>
    <property type="match status" value="1"/>
</dbReference>
<dbReference type="Gene3D" id="3.40.50.170">
    <property type="entry name" value="Formyl transferase, N-terminal domain"/>
    <property type="match status" value="1"/>
</dbReference>
<dbReference type="HAMAP" id="MF_00182">
    <property type="entry name" value="Formyl_trans"/>
    <property type="match status" value="1"/>
</dbReference>
<dbReference type="InterPro" id="IPR005794">
    <property type="entry name" value="Fmt"/>
</dbReference>
<dbReference type="InterPro" id="IPR005793">
    <property type="entry name" value="Formyl_trans_C"/>
</dbReference>
<dbReference type="InterPro" id="IPR037022">
    <property type="entry name" value="Formyl_trans_C_sf"/>
</dbReference>
<dbReference type="InterPro" id="IPR002376">
    <property type="entry name" value="Formyl_transf_N"/>
</dbReference>
<dbReference type="InterPro" id="IPR036477">
    <property type="entry name" value="Formyl_transf_N_sf"/>
</dbReference>
<dbReference type="InterPro" id="IPR011034">
    <property type="entry name" value="Formyl_transferase-like_C_sf"/>
</dbReference>
<dbReference type="InterPro" id="IPR001555">
    <property type="entry name" value="GART_AS"/>
</dbReference>
<dbReference type="InterPro" id="IPR044135">
    <property type="entry name" value="Met-tRNA-FMT_C"/>
</dbReference>
<dbReference type="InterPro" id="IPR041711">
    <property type="entry name" value="Met-tRNA-FMT_N"/>
</dbReference>
<dbReference type="NCBIfam" id="TIGR00460">
    <property type="entry name" value="fmt"/>
    <property type="match status" value="1"/>
</dbReference>
<dbReference type="PANTHER" id="PTHR11138">
    <property type="entry name" value="METHIONYL-TRNA FORMYLTRANSFERASE"/>
    <property type="match status" value="1"/>
</dbReference>
<dbReference type="PANTHER" id="PTHR11138:SF5">
    <property type="entry name" value="METHIONYL-TRNA FORMYLTRANSFERASE, MITOCHONDRIAL"/>
    <property type="match status" value="1"/>
</dbReference>
<dbReference type="Pfam" id="PF02911">
    <property type="entry name" value="Formyl_trans_C"/>
    <property type="match status" value="1"/>
</dbReference>
<dbReference type="Pfam" id="PF00551">
    <property type="entry name" value="Formyl_trans_N"/>
    <property type="match status" value="1"/>
</dbReference>
<dbReference type="SUPFAM" id="SSF50486">
    <property type="entry name" value="FMT C-terminal domain-like"/>
    <property type="match status" value="1"/>
</dbReference>
<dbReference type="SUPFAM" id="SSF53328">
    <property type="entry name" value="Formyltransferase"/>
    <property type="match status" value="1"/>
</dbReference>
<dbReference type="PROSITE" id="PS00373">
    <property type="entry name" value="GART"/>
    <property type="match status" value="1"/>
</dbReference>
<feature type="chain" id="PRO_1000020038" description="Methionyl-tRNA formyltransferase">
    <location>
        <begin position="1"/>
        <end position="327"/>
    </location>
</feature>
<feature type="binding site" evidence="1">
    <location>
        <begin position="121"/>
        <end position="124"/>
    </location>
    <ligand>
        <name>(6S)-5,6,7,8-tetrahydrofolate</name>
        <dbReference type="ChEBI" id="CHEBI:57453"/>
    </ligand>
</feature>
<keyword id="KW-0648">Protein biosynthesis</keyword>
<keyword id="KW-0808">Transferase</keyword>
<sequence>MTHTLRVIFAGTPEFAAAALAAIHEAGFPVPLVLTQPDRPAGRGMKLQASAVKRYAVEHGMPVAQPPSLRRAGKFPAEAAEAIELLRATPHDVMVVAAYGLLLPQEVLDIPRAGCINIHASLLPRWRGAAPIHRAIEAGDAETGVTLMQMDVGLDTGAMIDEARIAIAPDDTTATLHDRLAADGARLIVAALERLERDGALPATPQPADGVTYAEKIGKHEAALDWRKAADVLARQVRAFDPFPGGVATLDGAAIKLWAAEPVAARGDAAPGTIVEAAPEGVIVACGAGALRVTQLQKPGGKRLPAREFLAGSPLAAGQRFALPDAA</sequence>
<accession>A4JJ22</accession>